<feature type="chain" id="PRO_0000408164" description="Capsid vertex component 1">
    <location>
        <begin position="1"/>
        <end position="460"/>
    </location>
</feature>
<feature type="region of interest" description="Disordered" evidence="2">
    <location>
        <begin position="167"/>
        <end position="197"/>
    </location>
</feature>
<feature type="compositionally biased region" description="Basic and acidic residues" evidence="2">
    <location>
        <begin position="173"/>
        <end position="184"/>
    </location>
</feature>
<proteinExistence type="inferred from homology"/>
<gene>
    <name evidence="1" type="primary">CVC1</name>
</gene>
<keyword id="KW-0167">Capsid protein</keyword>
<keyword id="KW-1048">Host nucleus</keyword>
<keyword id="KW-0426">Late protein</keyword>
<keyword id="KW-0231">Viral genome packaging</keyword>
<keyword id="KW-1188">Viral release from host cell</keyword>
<keyword id="KW-0946">Virion</keyword>
<comment type="function">
    <text evidence="1">Capsid vertex-specific component that plays a role during viral DNA encapsidation, assuring correct genome cleavage and presumably stabilizing capsids that contain full-length viral genomes.</text>
</comment>
<comment type="subunit">
    <text evidence="1">Interacts (via C-terminus) with capsid vertex component 2/CVC2.</text>
</comment>
<comment type="subcellular location">
    <subcellularLocation>
        <location evidence="1">Virion</location>
    </subcellularLocation>
    <subcellularLocation>
        <location evidence="1">Host nucleus</location>
    </subcellularLocation>
</comment>
<comment type="similarity">
    <text evidence="1">Belongs to the herpesviridae CVC1 protein family.</text>
</comment>
<sequence length="460" mass="52642">MEIHLFNEIGKVTDGPFMVHVALSTYRFDLGQIDMLFIRSVFLHNKHISCWIRIPFNIRNVDVDLHRYFSFKPKRKNERTIILARPVVFFSLPLLSPGIDNNKLAVEAMCICRFVNTNGAEFFDLEFMYEDILREFPDVGDECIKEDDHVDDFFTLGACSSATVGTVQNSTGQDHRSPVNDNNEHTVTPGPLEPPSVVRGVDSNSGNGLNNMTPGKCNGYPTGKHVWKAIDIYRLQPLHTPSDNVYRVLYDKSSFLKPRISQPPYDGLASCFFLRHEVYRFMRVIGTEIIDKFFDVMNSEDGILFQKFLCHVPMNALDISIPEMVYLSQNVWTSHVDPRSCIIKGVVAHLFKNPRRPCFVGSLTENEYWVDVIDIRQNRIYYGQKIKLAVDQETNLLTCNDKSRRYEQRAGLSVLYINTDLCCIWSFTGGFAVEFRLTLEDIGNVDLIRAVFGAPSTLFE</sequence>
<organism>
    <name type="scientific">Elephantid herpesvirus 1 (isolate Asian elephant/Berlin/Kiba/1998)</name>
    <name type="common">EIHV-1</name>
    <name type="synonym">Elephant endotheliotropic herpesvirus</name>
    <dbReference type="NCBI Taxonomy" id="654902"/>
    <lineage>
        <taxon>Viruses</taxon>
        <taxon>Duplodnaviria</taxon>
        <taxon>Heunggongvirae</taxon>
        <taxon>Peploviricota</taxon>
        <taxon>Herviviricetes</taxon>
        <taxon>Herpesvirales</taxon>
        <taxon>Orthoherpesviridae</taxon>
        <taxon>Betaherpesvirinae</taxon>
        <taxon>Proboscivirus</taxon>
        <taxon>Proboscivirus elephantidbeta1</taxon>
        <taxon>Elephantid herpesvirus 1</taxon>
    </lineage>
</organism>
<dbReference type="EMBL" id="AF322977">
    <property type="protein sequence ID" value="ABG36585.1"/>
    <property type="molecule type" value="Genomic_DNA"/>
</dbReference>
<dbReference type="SMR" id="Q18LD4"/>
<dbReference type="GO" id="GO:0042025">
    <property type="term" value="C:host cell nucleus"/>
    <property type="evidence" value="ECO:0007669"/>
    <property type="project" value="UniProtKB-SubCell"/>
</dbReference>
<dbReference type="GO" id="GO:0019028">
    <property type="term" value="C:viral capsid"/>
    <property type="evidence" value="ECO:0007669"/>
    <property type="project" value="UniProtKB-KW"/>
</dbReference>
<dbReference type="GO" id="GO:0051276">
    <property type="term" value="P:chromosome organization"/>
    <property type="evidence" value="ECO:0007669"/>
    <property type="project" value="InterPro"/>
</dbReference>
<dbReference type="HAMAP" id="MF_04017">
    <property type="entry name" value="HSV_CVC1"/>
    <property type="match status" value="1"/>
</dbReference>
<dbReference type="InterPro" id="IPR007640">
    <property type="entry name" value="UL17-like"/>
</dbReference>
<dbReference type="Pfam" id="PF04559">
    <property type="entry name" value="Herpes_UL17"/>
    <property type="match status" value="1"/>
</dbReference>
<reference key="1">
    <citation type="journal article" date="2007" name="J. Virol.">
        <title>Identification of novel rodent herpesviruses, including the first gammaherpesvirus of Mus musculus.</title>
        <authorList>
            <person name="Ehlers B."/>
            <person name="Kuchler J."/>
            <person name="Yasmum N."/>
            <person name="Dural G."/>
            <person name="Voigt S."/>
            <person name="Schmidt-Chanasit J."/>
            <person name="Jakel T."/>
            <person name="Matuschka F.R."/>
            <person name="Richter D."/>
            <person name="Essbauer S."/>
            <person name="Hughes D.J."/>
            <person name="Summers C."/>
            <person name="Bennett M."/>
            <person name="Stewart J.P."/>
            <person name="Ulrich R.G."/>
        </authorList>
    </citation>
    <scope>NUCLEOTIDE SEQUENCE [GENOMIC DNA]</scope>
</reference>
<reference key="2">
    <citation type="journal article" date="2001" name="J. Gen. Virol.">
        <title>Genetic and ultrastructural characterization of a European isolate of the fatal endotheliotropic elephant herpesvirus.</title>
        <authorList>
            <person name="Ehlers B."/>
            <person name="Burkhardt S."/>
            <person name="Goltz M."/>
            <person name="Bergmann V."/>
            <person name="Ochs A."/>
            <person name="Weiler H."/>
            <person name="Hentschke J."/>
        </authorList>
    </citation>
    <scope>NUCLEOTIDE SEQUENCE [GENOMIC DNA]</scope>
</reference>
<organismHost>
    <name type="scientific">Elephas maximus</name>
    <name type="common">Indian elephant</name>
    <dbReference type="NCBI Taxonomy" id="9783"/>
</organismHost>
<organismHost>
    <name type="scientific">Loxodonta africana</name>
    <name type="common">African elephant</name>
    <dbReference type="NCBI Taxonomy" id="9785"/>
</organismHost>
<organismHost>
    <name type="scientific">Loxodonta cyclotis</name>
    <name type="common">African forest elephant</name>
    <dbReference type="NCBI Taxonomy" id="99490"/>
</organismHost>
<accession>Q18LD4</accession>
<evidence type="ECO:0000255" key="1">
    <source>
        <dbReference type="HAMAP-Rule" id="MF_04017"/>
    </source>
</evidence>
<evidence type="ECO:0000256" key="2">
    <source>
        <dbReference type="SAM" id="MobiDB-lite"/>
    </source>
</evidence>
<protein>
    <recommendedName>
        <fullName evidence="1">Capsid vertex component 1</fullName>
    </recommendedName>
</protein>
<name>CVC1_ELHVK</name>